<proteinExistence type="inferred from homology"/>
<reference key="1">
    <citation type="submission" date="2008-12" db="EMBL/GenBank/DDBJ databases">
        <title>Complete sequence of chromosome of Shewanella baltica OS223.</title>
        <authorList>
            <consortium name="US DOE Joint Genome Institute"/>
            <person name="Lucas S."/>
            <person name="Copeland A."/>
            <person name="Lapidus A."/>
            <person name="Glavina del Rio T."/>
            <person name="Dalin E."/>
            <person name="Tice H."/>
            <person name="Bruce D."/>
            <person name="Goodwin L."/>
            <person name="Pitluck S."/>
            <person name="Chertkov O."/>
            <person name="Meincke L."/>
            <person name="Brettin T."/>
            <person name="Detter J.C."/>
            <person name="Han C."/>
            <person name="Kuske C.R."/>
            <person name="Larimer F."/>
            <person name="Land M."/>
            <person name="Hauser L."/>
            <person name="Kyrpides N."/>
            <person name="Ovchinnikova G."/>
            <person name="Brettar I."/>
            <person name="Rodrigues J."/>
            <person name="Konstantinidis K."/>
            <person name="Tiedje J."/>
        </authorList>
    </citation>
    <scope>NUCLEOTIDE SEQUENCE [LARGE SCALE GENOMIC DNA]</scope>
    <source>
        <strain>OS223</strain>
    </source>
</reference>
<name>SYH_SHEB2</name>
<comment type="catalytic activity">
    <reaction evidence="1">
        <text>tRNA(His) + L-histidine + ATP = L-histidyl-tRNA(His) + AMP + diphosphate + H(+)</text>
        <dbReference type="Rhea" id="RHEA:17313"/>
        <dbReference type="Rhea" id="RHEA-COMP:9665"/>
        <dbReference type="Rhea" id="RHEA-COMP:9689"/>
        <dbReference type="ChEBI" id="CHEBI:15378"/>
        <dbReference type="ChEBI" id="CHEBI:30616"/>
        <dbReference type="ChEBI" id="CHEBI:33019"/>
        <dbReference type="ChEBI" id="CHEBI:57595"/>
        <dbReference type="ChEBI" id="CHEBI:78442"/>
        <dbReference type="ChEBI" id="CHEBI:78527"/>
        <dbReference type="ChEBI" id="CHEBI:456215"/>
        <dbReference type="EC" id="6.1.1.21"/>
    </reaction>
</comment>
<comment type="subunit">
    <text evidence="1">Homodimer.</text>
</comment>
<comment type="subcellular location">
    <subcellularLocation>
        <location evidence="1">Cytoplasm</location>
    </subcellularLocation>
</comment>
<comment type="similarity">
    <text evidence="1">Belongs to the class-II aminoacyl-tRNA synthetase family.</text>
</comment>
<dbReference type="EC" id="6.1.1.21" evidence="1"/>
<dbReference type="EMBL" id="CP001252">
    <property type="protein sequence ID" value="ACK45882.1"/>
    <property type="molecule type" value="Genomic_DNA"/>
</dbReference>
<dbReference type="RefSeq" id="WP_006082481.1">
    <property type="nucleotide sequence ID" value="NC_011663.1"/>
</dbReference>
<dbReference type="SMR" id="B8E9S8"/>
<dbReference type="KEGG" id="sbp:Sbal223_1374"/>
<dbReference type="HOGENOM" id="CLU_025113_1_1_6"/>
<dbReference type="Proteomes" id="UP000002507">
    <property type="component" value="Chromosome"/>
</dbReference>
<dbReference type="GO" id="GO:0005737">
    <property type="term" value="C:cytoplasm"/>
    <property type="evidence" value="ECO:0007669"/>
    <property type="project" value="UniProtKB-SubCell"/>
</dbReference>
<dbReference type="GO" id="GO:0005524">
    <property type="term" value="F:ATP binding"/>
    <property type="evidence" value="ECO:0007669"/>
    <property type="project" value="UniProtKB-UniRule"/>
</dbReference>
<dbReference type="GO" id="GO:0004821">
    <property type="term" value="F:histidine-tRNA ligase activity"/>
    <property type="evidence" value="ECO:0007669"/>
    <property type="project" value="UniProtKB-UniRule"/>
</dbReference>
<dbReference type="GO" id="GO:0006427">
    <property type="term" value="P:histidyl-tRNA aminoacylation"/>
    <property type="evidence" value="ECO:0007669"/>
    <property type="project" value="UniProtKB-UniRule"/>
</dbReference>
<dbReference type="CDD" id="cd00773">
    <property type="entry name" value="HisRS-like_core"/>
    <property type="match status" value="1"/>
</dbReference>
<dbReference type="CDD" id="cd00859">
    <property type="entry name" value="HisRS_anticodon"/>
    <property type="match status" value="1"/>
</dbReference>
<dbReference type="FunFam" id="3.30.930.10:FF:000005">
    <property type="entry name" value="Histidine--tRNA ligase"/>
    <property type="match status" value="1"/>
</dbReference>
<dbReference type="Gene3D" id="3.40.50.800">
    <property type="entry name" value="Anticodon-binding domain"/>
    <property type="match status" value="1"/>
</dbReference>
<dbReference type="Gene3D" id="3.30.930.10">
    <property type="entry name" value="Bira Bifunctional Protein, Domain 2"/>
    <property type="match status" value="1"/>
</dbReference>
<dbReference type="HAMAP" id="MF_00127">
    <property type="entry name" value="His_tRNA_synth"/>
    <property type="match status" value="1"/>
</dbReference>
<dbReference type="InterPro" id="IPR006195">
    <property type="entry name" value="aa-tRNA-synth_II"/>
</dbReference>
<dbReference type="InterPro" id="IPR045864">
    <property type="entry name" value="aa-tRNA-synth_II/BPL/LPL"/>
</dbReference>
<dbReference type="InterPro" id="IPR004154">
    <property type="entry name" value="Anticodon-bd"/>
</dbReference>
<dbReference type="InterPro" id="IPR036621">
    <property type="entry name" value="Anticodon-bd_dom_sf"/>
</dbReference>
<dbReference type="InterPro" id="IPR015807">
    <property type="entry name" value="His-tRNA-ligase"/>
</dbReference>
<dbReference type="InterPro" id="IPR041715">
    <property type="entry name" value="HisRS-like_core"/>
</dbReference>
<dbReference type="InterPro" id="IPR004516">
    <property type="entry name" value="HisRS/HisZ"/>
</dbReference>
<dbReference type="InterPro" id="IPR033656">
    <property type="entry name" value="HisRS_anticodon"/>
</dbReference>
<dbReference type="NCBIfam" id="TIGR00442">
    <property type="entry name" value="hisS"/>
    <property type="match status" value="1"/>
</dbReference>
<dbReference type="PANTHER" id="PTHR43707:SF1">
    <property type="entry name" value="HISTIDINE--TRNA LIGASE, MITOCHONDRIAL-RELATED"/>
    <property type="match status" value="1"/>
</dbReference>
<dbReference type="PANTHER" id="PTHR43707">
    <property type="entry name" value="HISTIDYL-TRNA SYNTHETASE"/>
    <property type="match status" value="1"/>
</dbReference>
<dbReference type="Pfam" id="PF03129">
    <property type="entry name" value="HGTP_anticodon"/>
    <property type="match status" value="1"/>
</dbReference>
<dbReference type="Pfam" id="PF13393">
    <property type="entry name" value="tRNA-synt_His"/>
    <property type="match status" value="1"/>
</dbReference>
<dbReference type="PIRSF" id="PIRSF001549">
    <property type="entry name" value="His-tRNA_synth"/>
    <property type="match status" value="1"/>
</dbReference>
<dbReference type="SUPFAM" id="SSF52954">
    <property type="entry name" value="Class II aaRS ABD-related"/>
    <property type="match status" value="1"/>
</dbReference>
<dbReference type="SUPFAM" id="SSF55681">
    <property type="entry name" value="Class II aaRS and biotin synthetases"/>
    <property type="match status" value="1"/>
</dbReference>
<dbReference type="PROSITE" id="PS50862">
    <property type="entry name" value="AA_TRNA_LIGASE_II"/>
    <property type="match status" value="1"/>
</dbReference>
<accession>B8E9S8</accession>
<organism>
    <name type="scientific">Shewanella baltica (strain OS223)</name>
    <dbReference type="NCBI Taxonomy" id="407976"/>
    <lineage>
        <taxon>Bacteria</taxon>
        <taxon>Pseudomonadati</taxon>
        <taxon>Pseudomonadota</taxon>
        <taxon>Gammaproteobacteria</taxon>
        <taxon>Alteromonadales</taxon>
        <taxon>Shewanellaceae</taxon>
        <taxon>Shewanella</taxon>
    </lineage>
</organism>
<evidence type="ECO:0000255" key="1">
    <source>
        <dbReference type="HAMAP-Rule" id="MF_00127"/>
    </source>
</evidence>
<gene>
    <name evidence="1" type="primary">hisS</name>
    <name type="ordered locus">Sbal223_1374</name>
</gene>
<feature type="chain" id="PRO_1000199150" description="Histidine--tRNA ligase">
    <location>
        <begin position="1"/>
        <end position="426"/>
    </location>
</feature>
<protein>
    <recommendedName>
        <fullName evidence="1">Histidine--tRNA ligase</fullName>
        <ecNumber evidence="1">6.1.1.21</ecNumber>
    </recommendedName>
    <alternativeName>
        <fullName evidence="1">Histidyl-tRNA synthetase</fullName>
        <shortName evidence="1">HisRS</shortName>
    </alternativeName>
</protein>
<sequence length="426" mass="47303">MAKQIQAIRGMNDILPTQSPLWQKVEAVLRSSVSAYGYSEIRTPIVENTDLFKRSIGEVTDIVEKEMYTFADNNGDSLTLRPEGTASTVRAGNENGLLYNQEQRLWYMGPMFRHERPQKGRYRQFNQFGVEVYGIGTADIDAEVLMLSARLWEKLGISDHVSLELNTLGDPAERAVYRDALIAFLEQHKDALDEDSKRRMYSNPLRVLDSKDQNVQAILAGAPELMDFLGEESKTHFSQLRELLDAVGIKYTINPRLVRGLDYYNRTVFEWVTSSLGSQGTVLAGGRYDGLVAQLGGKDTPAVGFAMGLERIVLLLETLELNKDIPSEVDVYVTAMGDSCLVEAIKIAQELRSALPNLKVMSHCGGGNVKKQMKRADKSGASVALLIGEDELAEGMVTVKHLRNDIEQQRVARSALGAFLAELAIK</sequence>
<keyword id="KW-0030">Aminoacyl-tRNA synthetase</keyword>
<keyword id="KW-0067">ATP-binding</keyword>
<keyword id="KW-0963">Cytoplasm</keyword>
<keyword id="KW-0436">Ligase</keyword>
<keyword id="KW-0547">Nucleotide-binding</keyword>
<keyword id="KW-0648">Protein biosynthesis</keyword>